<sequence>MADRRNLFFFYGDDKAKLVEKMKPIYRILEENGFTILDHPKNANAIVSVGDDATFLQAVRKTGFREDCLYAGISTKDEISFYCDFHIDHVDIALQEITKNEIEVRKYPTIEVDVDGSTSFHCLNEFSLRSSIIKTFVVDVHVDNLYFETFRGDGLVVSTPTGSTAYNKSLRGAVVDPLIPCFQVSELASLNNNTYRTLGSPFILNHERTLTLKLRPDGNDYPVIGMDNEALSIKQVEKAVVRLSDKQIKTVKLKNNSFWEKVQRTFL</sequence>
<gene>
    <name evidence="1" type="primary">nadK2</name>
    <name type="ordered locus">BCE_4778</name>
</gene>
<dbReference type="EC" id="2.7.1.23" evidence="1"/>
<dbReference type="EMBL" id="AE017194">
    <property type="protein sequence ID" value="AAS43679.1"/>
    <property type="molecule type" value="Genomic_DNA"/>
</dbReference>
<dbReference type="SMR" id="Q72Z91"/>
<dbReference type="KEGG" id="bca:BCE_4778"/>
<dbReference type="HOGENOM" id="CLU_008831_0_3_9"/>
<dbReference type="Proteomes" id="UP000002527">
    <property type="component" value="Chromosome"/>
</dbReference>
<dbReference type="GO" id="GO:0005737">
    <property type="term" value="C:cytoplasm"/>
    <property type="evidence" value="ECO:0007669"/>
    <property type="project" value="UniProtKB-SubCell"/>
</dbReference>
<dbReference type="GO" id="GO:0005524">
    <property type="term" value="F:ATP binding"/>
    <property type="evidence" value="ECO:0007669"/>
    <property type="project" value="UniProtKB-KW"/>
</dbReference>
<dbReference type="GO" id="GO:0046872">
    <property type="term" value="F:metal ion binding"/>
    <property type="evidence" value="ECO:0007669"/>
    <property type="project" value="UniProtKB-UniRule"/>
</dbReference>
<dbReference type="GO" id="GO:0051287">
    <property type="term" value="F:NAD binding"/>
    <property type="evidence" value="ECO:0007669"/>
    <property type="project" value="UniProtKB-ARBA"/>
</dbReference>
<dbReference type="GO" id="GO:0003951">
    <property type="term" value="F:NAD+ kinase activity"/>
    <property type="evidence" value="ECO:0007669"/>
    <property type="project" value="UniProtKB-UniRule"/>
</dbReference>
<dbReference type="GO" id="GO:0019674">
    <property type="term" value="P:NAD metabolic process"/>
    <property type="evidence" value="ECO:0007669"/>
    <property type="project" value="InterPro"/>
</dbReference>
<dbReference type="GO" id="GO:0006741">
    <property type="term" value="P:NADP biosynthetic process"/>
    <property type="evidence" value="ECO:0007669"/>
    <property type="project" value="UniProtKB-UniRule"/>
</dbReference>
<dbReference type="FunFam" id="2.60.200.30:FF:000002">
    <property type="entry name" value="NAD kinase"/>
    <property type="match status" value="1"/>
</dbReference>
<dbReference type="Gene3D" id="3.40.50.10330">
    <property type="entry name" value="Probable inorganic polyphosphate/atp-NAD kinase, domain 1"/>
    <property type="match status" value="1"/>
</dbReference>
<dbReference type="Gene3D" id="2.60.200.30">
    <property type="entry name" value="Probable inorganic polyphosphate/atp-NAD kinase, domain 2"/>
    <property type="match status" value="1"/>
</dbReference>
<dbReference type="HAMAP" id="MF_00361">
    <property type="entry name" value="NAD_kinase"/>
    <property type="match status" value="1"/>
</dbReference>
<dbReference type="InterPro" id="IPR017438">
    <property type="entry name" value="ATP-NAD_kinase_N"/>
</dbReference>
<dbReference type="InterPro" id="IPR017437">
    <property type="entry name" value="ATP-NAD_kinase_PpnK-typ_C"/>
</dbReference>
<dbReference type="InterPro" id="IPR016064">
    <property type="entry name" value="NAD/diacylglycerol_kinase_sf"/>
</dbReference>
<dbReference type="InterPro" id="IPR002504">
    <property type="entry name" value="NADK"/>
</dbReference>
<dbReference type="NCBIfam" id="NF002902">
    <property type="entry name" value="PRK03501.1"/>
    <property type="match status" value="1"/>
</dbReference>
<dbReference type="PANTHER" id="PTHR20275">
    <property type="entry name" value="NAD KINASE"/>
    <property type="match status" value="1"/>
</dbReference>
<dbReference type="PANTHER" id="PTHR20275:SF9">
    <property type="entry name" value="NAD KINASE 2"/>
    <property type="match status" value="1"/>
</dbReference>
<dbReference type="Pfam" id="PF20143">
    <property type="entry name" value="NAD_kinase_C"/>
    <property type="match status" value="1"/>
</dbReference>
<dbReference type="SUPFAM" id="SSF111331">
    <property type="entry name" value="NAD kinase/diacylglycerol kinase-like"/>
    <property type="match status" value="1"/>
</dbReference>
<name>NADK2_BACC1</name>
<accession>Q72Z91</accession>
<feature type="chain" id="PRO_0000229600" description="NAD kinase 2">
    <location>
        <begin position="1"/>
        <end position="267"/>
    </location>
</feature>
<feature type="active site" description="Proton acceptor" evidence="1">
    <location>
        <position position="52"/>
    </location>
</feature>
<feature type="binding site" evidence="1">
    <location>
        <begin position="52"/>
        <end position="53"/>
    </location>
    <ligand>
        <name>NAD(+)</name>
        <dbReference type="ChEBI" id="CHEBI:57540"/>
    </ligand>
</feature>
<feature type="binding site" evidence="1">
    <location>
        <begin position="124"/>
        <end position="125"/>
    </location>
    <ligand>
        <name>NAD(+)</name>
        <dbReference type="ChEBI" id="CHEBI:57540"/>
    </ligand>
</feature>
<feature type="binding site" evidence="1">
    <location>
        <position position="151"/>
    </location>
    <ligand>
        <name>NAD(+)</name>
        <dbReference type="ChEBI" id="CHEBI:57540"/>
    </ligand>
</feature>
<feature type="binding site" evidence="1">
    <location>
        <position position="153"/>
    </location>
    <ligand>
        <name>NAD(+)</name>
        <dbReference type="ChEBI" id="CHEBI:57540"/>
    </ligand>
</feature>
<feature type="binding site" evidence="1">
    <location>
        <begin position="164"/>
        <end position="169"/>
    </location>
    <ligand>
        <name>NAD(+)</name>
        <dbReference type="ChEBI" id="CHEBI:57540"/>
    </ligand>
</feature>
<feature type="binding site" evidence="1">
    <location>
        <position position="188"/>
    </location>
    <ligand>
        <name>NAD(+)</name>
        <dbReference type="ChEBI" id="CHEBI:57540"/>
    </ligand>
</feature>
<comment type="function">
    <text evidence="1">Involved in the regulation of the intracellular balance of NAD and NADP, and is a key enzyme in the biosynthesis of NADP. Catalyzes specifically the phosphorylation on 2'-hydroxyl of the adenosine moiety of NAD to yield NADP.</text>
</comment>
<comment type="catalytic activity">
    <reaction evidence="1">
        <text>NAD(+) + ATP = ADP + NADP(+) + H(+)</text>
        <dbReference type="Rhea" id="RHEA:18629"/>
        <dbReference type="ChEBI" id="CHEBI:15378"/>
        <dbReference type="ChEBI" id="CHEBI:30616"/>
        <dbReference type="ChEBI" id="CHEBI:57540"/>
        <dbReference type="ChEBI" id="CHEBI:58349"/>
        <dbReference type="ChEBI" id="CHEBI:456216"/>
        <dbReference type="EC" id="2.7.1.23"/>
    </reaction>
</comment>
<comment type="cofactor">
    <cofactor evidence="1">
        <name>a divalent metal cation</name>
        <dbReference type="ChEBI" id="CHEBI:60240"/>
    </cofactor>
</comment>
<comment type="subcellular location">
    <subcellularLocation>
        <location evidence="1">Cytoplasm</location>
    </subcellularLocation>
</comment>
<comment type="similarity">
    <text evidence="1">Belongs to the NAD kinase family.</text>
</comment>
<reference key="1">
    <citation type="journal article" date="2004" name="Nucleic Acids Res.">
        <title>The genome sequence of Bacillus cereus ATCC 10987 reveals metabolic adaptations and a large plasmid related to Bacillus anthracis pXO1.</title>
        <authorList>
            <person name="Rasko D.A."/>
            <person name="Ravel J."/>
            <person name="Oekstad O.A."/>
            <person name="Helgason E."/>
            <person name="Cer R.Z."/>
            <person name="Jiang L."/>
            <person name="Shores K.A."/>
            <person name="Fouts D.E."/>
            <person name="Tourasse N.J."/>
            <person name="Angiuoli S.V."/>
            <person name="Kolonay J.F."/>
            <person name="Nelson W.C."/>
            <person name="Kolstoe A.-B."/>
            <person name="Fraser C.M."/>
            <person name="Read T.D."/>
        </authorList>
    </citation>
    <scope>NUCLEOTIDE SEQUENCE [LARGE SCALE GENOMIC DNA]</scope>
    <source>
        <strain>ATCC 10987 / NRS 248</strain>
    </source>
</reference>
<protein>
    <recommendedName>
        <fullName evidence="1">NAD kinase 2</fullName>
        <ecNumber evidence="1">2.7.1.23</ecNumber>
    </recommendedName>
    <alternativeName>
        <fullName evidence="1">ATP-dependent NAD kinase 2</fullName>
    </alternativeName>
</protein>
<evidence type="ECO:0000255" key="1">
    <source>
        <dbReference type="HAMAP-Rule" id="MF_00361"/>
    </source>
</evidence>
<keyword id="KW-0067">ATP-binding</keyword>
<keyword id="KW-0963">Cytoplasm</keyword>
<keyword id="KW-0418">Kinase</keyword>
<keyword id="KW-0520">NAD</keyword>
<keyword id="KW-0521">NADP</keyword>
<keyword id="KW-0547">Nucleotide-binding</keyword>
<keyword id="KW-0808">Transferase</keyword>
<organism>
    <name type="scientific">Bacillus cereus (strain ATCC 10987 / NRS 248)</name>
    <dbReference type="NCBI Taxonomy" id="222523"/>
    <lineage>
        <taxon>Bacteria</taxon>
        <taxon>Bacillati</taxon>
        <taxon>Bacillota</taxon>
        <taxon>Bacilli</taxon>
        <taxon>Bacillales</taxon>
        <taxon>Bacillaceae</taxon>
        <taxon>Bacillus</taxon>
        <taxon>Bacillus cereus group</taxon>
    </lineage>
</organism>
<proteinExistence type="inferred from homology"/>